<dbReference type="EMBL" id="AE017245">
    <property type="protein sequence ID" value="AAZ43843.1"/>
    <property type="molecule type" value="Genomic_DNA"/>
</dbReference>
<dbReference type="RefSeq" id="WP_011283574.1">
    <property type="nucleotide sequence ID" value="NC_007294.1"/>
</dbReference>
<dbReference type="SMR" id="Q4A5X8"/>
<dbReference type="STRING" id="262723.MS53_0431"/>
<dbReference type="KEGG" id="msy:MS53_0431"/>
<dbReference type="eggNOG" id="COG0231">
    <property type="taxonomic scope" value="Bacteria"/>
</dbReference>
<dbReference type="HOGENOM" id="CLU_074944_2_1_14"/>
<dbReference type="OrthoDB" id="9801844at2"/>
<dbReference type="UniPathway" id="UPA00345"/>
<dbReference type="Proteomes" id="UP000000549">
    <property type="component" value="Chromosome"/>
</dbReference>
<dbReference type="GO" id="GO:0005737">
    <property type="term" value="C:cytoplasm"/>
    <property type="evidence" value="ECO:0007669"/>
    <property type="project" value="UniProtKB-SubCell"/>
</dbReference>
<dbReference type="GO" id="GO:0003746">
    <property type="term" value="F:translation elongation factor activity"/>
    <property type="evidence" value="ECO:0007669"/>
    <property type="project" value="UniProtKB-UniRule"/>
</dbReference>
<dbReference type="GO" id="GO:0043043">
    <property type="term" value="P:peptide biosynthetic process"/>
    <property type="evidence" value="ECO:0007669"/>
    <property type="project" value="InterPro"/>
</dbReference>
<dbReference type="FunFam" id="2.30.30.30:FF:000003">
    <property type="entry name" value="Elongation factor P"/>
    <property type="match status" value="1"/>
</dbReference>
<dbReference type="FunFam" id="2.40.50.140:FF:000004">
    <property type="entry name" value="Elongation factor P"/>
    <property type="match status" value="1"/>
</dbReference>
<dbReference type="FunFam" id="2.40.50.140:FF:000009">
    <property type="entry name" value="Elongation factor P"/>
    <property type="match status" value="1"/>
</dbReference>
<dbReference type="Gene3D" id="2.30.30.30">
    <property type="match status" value="1"/>
</dbReference>
<dbReference type="Gene3D" id="2.40.50.140">
    <property type="entry name" value="Nucleic acid-binding proteins"/>
    <property type="match status" value="2"/>
</dbReference>
<dbReference type="HAMAP" id="MF_00141">
    <property type="entry name" value="EF_P"/>
    <property type="match status" value="1"/>
</dbReference>
<dbReference type="InterPro" id="IPR015365">
    <property type="entry name" value="Elong-fact-P_C"/>
</dbReference>
<dbReference type="InterPro" id="IPR012340">
    <property type="entry name" value="NA-bd_OB-fold"/>
</dbReference>
<dbReference type="InterPro" id="IPR014722">
    <property type="entry name" value="Rib_uL2_dom2"/>
</dbReference>
<dbReference type="InterPro" id="IPR020599">
    <property type="entry name" value="Transl_elong_fac_P/YeiP"/>
</dbReference>
<dbReference type="InterPro" id="IPR013185">
    <property type="entry name" value="Transl_elong_KOW-like"/>
</dbReference>
<dbReference type="InterPro" id="IPR001059">
    <property type="entry name" value="Transl_elong_P/YeiP_cen"/>
</dbReference>
<dbReference type="InterPro" id="IPR011768">
    <property type="entry name" value="Transl_elongation_fac_P"/>
</dbReference>
<dbReference type="InterPro" id="IPR008991">
    <property type="entry name" value="Translation_prot_SH3-like_sf"/>
</dbReference>
<dbReference type="NCBIfam" id="TIGR00038">
    <property type="entry name" value="efp"/>
    <property type="match status" value="1"/>
</dbReference>
<dbReference type="NCBIfam" id="NF001810">
    <property type="entry name" value="PRK00529.1"/>
    <property type="match status" value="1"/>
</dbReference>
<dbReference type="PANTHER" id="PTHR30053">
    <property type="entry name" value="ELONGATION FACTOR P"/>
    <property type="match status" value="1"/>
</dbReference>
<dbReference type="PANTHER" id="PTHR30053:SF12">
    <property type="entry name" value="ELONGATION FACTOR P (EF-P) FAMILY PROTEIN"/>
    <property type="match status" value="1"/>
</dbReference>
<dbReference type="Pfam" id="PF01132">
    <property type="entry name" value="EFP"/>
    <property type="match status" value="1"/>
</dbReference>
<dbReference type="Pfam" id="PF08207">
    <property type="entry name" value="EFP_N"/>
    <property type="match status" value="1"/>
</dbReference>
<dbReference type="Pfam" id="PF09285">
    <property type="entry name" value="Elong-fact-P_C"/>
    <property type="match status" value="1"/>
</dbReference>
<dbReference type="PIRSF" id="PIRSF005901">
    <property type="entry name" value="EF-P"/>
    <property type="match status" value="1"/>
</dbReference>
<dbReference type="SMART" id="SM01185">
    <property type="entry name" value="EFP"/>
    <property type="match status" value="1"/>
</dbReference>
<dbReference type="SMART" id="SM00841">
    <property type="entry name" value="Elong-fact-P_C"/>
    <property type="match status" value="1"/>
</dbReference>
<dbReference type="SUPFAM" id="SSF50249">
    <property type="entry name" value="Nucleic acid-binding proteins"/>
    <property type="match status" value="2"/>
</dbReference>
<dbReference type="SUPFAM" id="SSF50104">
    <property type="entry name" value="Translation proteins SH3-like domain"/>
    <property type="match status" value="1"/>
</dbReference>
<comment type="function">
    <text evidence="1">Involved in peptide bond synthesis. Stimulates efficient translation and peptide-bond synthesis on native or reconstituted 70S ribosomes in vitro. Probably functions indirectly by altering the affinity of the ribosome for aminoacyl-tRNA, thus increasing their reactivity as acceptors for peptidyl transferase.</text>
</comment>
<comment type="pathway">
    <text evidence="1">Protein biosynthesis; polypeptide chain elongation.</text>
</comment>
<comment type="subcellular location">
    <subcellularLocation>
        <location evidence="1">Cytoplasm</location>
    </subcellularLocation>
</comment>
<comment type="similarity">
    <text evidence="1">Belongs to the elongation factor P family.</text>
</comment>
<proteinExistence type="inferred from homology"/>
<protein>
    <recommendedName>
        <fullName evidence="1">Elongation factor P</fullName>
        <shortName evidence="1">EF-P</shortName>
    </recommendedName>
</protein>
<keyword id="KW-0963">Cytoplasm</keyword>
<keyword id="KW-0251">Elongation factor</keyword>
<keyword id="KW-0648">Protein biosynthesis</keyword>
<keyword id="KW-1185">Reference proteome</keyword>
<organism>
    <name type="scientific">Mycoplasmopsis synoviae (strain 53)</name>
    <name type="common">Mycoplasma synoviae</name>
    <dbReference type="NCBI Taxonomy" id="262723"/>
    <lineage>
        <taxon>Bacteria</taxon>
        <taxon>Bacillati</taxon>
        <taxon>Mycoplasmatota</taxon>
        <taxon>Mycoplasmoidales</taxon>
        <taxon>Metamycoplasmataceae</taxon>
        <taxon>Mycoplasmopsis</taxon>
    </lineage>
</organism>
<reference key="1">
    <citation type="journal article" date="2005" name="J. Bacteriol.">
        <title>Swine and poultry pathogens: the complete genome sequences of two strains of Mycoplasma hyopneumoniae and a strain of Mycoplasma synoviae.</title>
        <authorList>
            <person name="Vasconcelos A.T.R."/>
            <person name="Ferreira H.B."/>
            <person name="Bizarro C.V."/>
            <person name="Bonatto S.L."/>
            <person name="Carvalho M.O."/>
            <person name="Pinto P.M."/>
            <person name="Almeida D.F."/>
            <person name="Almeida L.G.P."/>
            <person name="Almeida R."/>
            <person name="Alves-Junior L."/>
            <person name="Assuncao E.N."/>
            <person name="Azevedo V.A.C."/>
            <person name="Bogo M.R."/>
            <person name="Brigido M.M."/>
            <person name="Brocchi M."/>
            <person name="Burity H.A."/>
            <person name="Camargo A.A."/>
            <person name="Camargo S.S."/>
            <person name="Carepo M.S."/>
            <person name="Carraro D.M."/>
            <person name="de Mattos Cascardo J.C."/>
            <person name="Castro L.A."/>
            <person name="Cavalcanti G."/>
            <person name="Chemale G."/>
            <person name="Collevatti R.G."/>
            <person name="Cunha C.W."/>
            <person name="Dallagiovanna B."/>
            <person name="Dambros B.P."/>
            <person name="Dellagostin O.A."/>
            <person name="Falcao C."/>
            <person name="Fantinatti-Garboggini F."/>
            <person name="Felipe M.S.S."/>
            <person name="Fiorentin L."/>
            <person name="Franco G.R."/>
            <person name="Freitas N.S.A."/>
            <person name="Frias D."/>
            <person name="Grangeiro T.B."/>
            <person name="Grisard E.C."/>
            <person name="Guimaraes C.T."/>
            <person name="Hungria M."/>
            <person name="Jardim S.N."/>
            <person name="Krieger M.A."/>
            <person name="Laurino J.P."/>
            <person name="Lima L.F.A."/>
            <person name="Lopes M.I."/>
            <person name="Loreto E.L.S."/>
            <person name="Madeira H.M.F."/>
            <person name="Manfio G.P."/>
            <person name="Maranhao A.Q."/>
            <person name="Martinkovics C.T."/>
            <person name="Medeiros S.R.B."/>
            <person name="Moreira M.A.M."/>
            <person name="Neiva M."/>
            <person name="Ramalho-Neto C.E."/>
            <person name="Nicolas M.F."/>
            <person name="Oliveira S.C."/>
            <person name="Paixao R.F.C."/>
            <person name="Pedrosa F.O."/>
            <person name="Pena S.D.J."/>
            <person name="Pereira M."/>
            <person name="Pereira-Ferrari L."/>
            <person name="Piffer I."/>
            <person name="Pinto L.S."/>
            <person name="Potrich D.P."/>
            <person name="Salim A.C.M."/>
            <person name="Santos F.R."/>
            <person name="Schmitt R."/>
            <person name="Schneider M.P.C."/>
            <person name="Schrank A."/>
            <person name="Schrank I.S."/>
            <person name="Schuck A.F."/>
            <person name="Seuanez H.N."/>
            <person name="Silva D.W."/>
            <person name="Silva R."/>
            <person name="Silva S.C."/>
            <person name="Soares C.M.A."/>
            <person name="Souza K.R.L."/>
            <person name="Souza R.C."/>
            <person name="Staats C.C."/>
            <person name="Steffens M.B.R."/>
            <person name="Teixeira S.M.R."/>
            <person name="Urmenyi T.P."/>
            <person name="Vainstein M.H."/>
            <person name="Zuccherato L.W."/>
            <person name="Simpson A.J.G."/>
            <person name="Zaha A."/>
        </authorList>
    </citation>
    <scope>NUCLEOTIDE SEQUENCE [LARGE SCALE GENOMIC DNA]</scope>
    <source>
        <strain>53</strain>
    </source>
</reference>
<sequence length="186" mass="21006">MIEVNKFKPGITFQDSGNIYVVLEATHSKQGRGQANVKAKAKNLRTGATTILSFTGGDKVEPAHIEKRKMNFLYSDDSNIYLMDSSDYSQIEIDLLKVEWEMNFLKENSEVQVRMFQDEILDIELPANVDLKVTYAPDAVKGNTTTNPQKKVTLETNFELETPMFIKENDVIIVSTETGKYVGKSK</sequence>
<feature type="chain" id="PRO_1000010783" description="Elongation factor P">
    <location>
        <begin position="1"/>
        <end position="186"/>
    </location>
</feature>
<name>EFP_MYCS5</name>
<gene>
    <name evidence="1" type="primary">efp</name>
    <name type="ordered locus">MS53_0431</name>
</gene>
<evidence type="ECO:0000255" key="1">
    <source>
        <dbReference type="HAMAP-Rule" id="MF_00141"/>
    </source>
</evidence>
<accession>Q4A5X8</accession>